<evidence type="ECO:0000255" key="1">
    <source>
        <dbReference type="HAMAP-Rule" id="MF_00808"/>
    </source>
</evidence>
<gene>
    <name evidence="1" type="primary">psbT</name>
    <name type="ordered locus">asl0137</name>
</gene>
<organism>
    <name type="scientific">Nostoc sp. (strain PCC 7120 / SAG 25.82 / UTEX 2576)</name>
    <dbReference type="NCBI Taxonomy" id="103690"/>
    <lineage>
        <taxon>Bacteria</taxon>
        <taxon>Bacillati</taxon>
        <taxon>Cyanobacteriota</taxon>
        <taxon>Cyanophyceae</taxon>
        <taxon>Nostocales</taxon>
        <taxon>Nostocaceae</taxon>
        <taxon>Nostoc</taxon>
    </lineage>
</organism>
<accession>Q8Z0F9</accession>
<dbReference type="EMBL" id="BA000019">
    <property type="protein sequence ID" value="BAB77661.1"/>
    <property type="molecule type" value="Genomic_DNA"/>
</dbReference>
<dbReference type="PIR" id="AI1823">
    <property type="entry name" value="AI1823"/>
</dbReference>
<dbReference type="RefSeq" id="WP_010994314.1">
    <property type="nucleotide sequence ID" value="NZ_RSCN01000016.1"/>
</dbReference>
<dbReference type="SMR" id="Q8Z0F9"/>
<dbReference type="STRING" id="103690.gene:10492142"/>
<dbReference type="KEGG" id="ana:asl0137"/>
<dbReference type="eggNOG" id="ENOG5033APQ">
    <property type="taxonomic scope" value="Bacteria"/>
</dbReference>
<dbReference type="Proteomes" id="UP000002483">
    <property type="component" value="Chromosome"/>
</dbReference>
<dbReference type="GO" id="GO:0009539">
    <property type="term" value="C:photosystem II reaction center"/>
    <property type="evidence" value="ECO:0007669"/>
    <property type="project" value="InterPro"/>
</dbReference>
<dbReference type="GO" id="GO:0031676">
    <property type="term" value="C:plasma membrane-derived thylakoid membrane"/>
    <property type="evidence" value="ECO:0007669"/>
    <property type="project" value="UniProtKB-SubCell"/>
</dbReference>
<dbReference type="GO" id="GO:0015979">
    <property type="term" value="P:photosynthesis"/>
    <property type="evidence" value="ECO:0007669"/>
    <property type="project" value="UniProtKB-UniRule"/>
</dbReference>
<dbReference type="HAMAP" id="MF_00808">
    <property type="entry name" value="PSII_PsbT"/>
    <property type="match status" value="1"/>
</dbReference>
<dbReference type="InterPro" id="IPR001743">
    <property type="entry name" value="PSII_PsbT"/>
</dbReference>
<dbReference type="InterPro" id="IPR037268">
    <property type="entry name" value="PSII_PsbT_sf"/>
</dbReference>
<dbReference type="NCBIfam" id="NF008825">
    <property type="entry name" value="PRK11875.1"/>
    <property type="match status" value="1"/>
</dbReference>
<dbReference type="PANTHER" id="PTHR36411">
    <property type="match status" value="1"/>
</dbReference>
<dbReference type="PANTHER" id="PTHR36411:SF2">
    <property type="entry name" value="PHOTOSYSTEM II REACTION CENTER PROTEIN T"/>
    <property type="match status" value="1"/>
</dbReference>
<dbReference type="Pfam" id="PF01405">
    <property type="entry name" value="PsbT"/>
    <property type="match status" value="1"/>
</dbReference>
<dbReference type="SUPFAM" id="SSF161029">
    <property type="entry name" value="Photosystem II reaction center protein T, PsbT"/>
    <property type="match status" value="1"/>
</dbReference>
<name>PSBT_NOSS1</name>
<proteinExistence type="inferred from homology"/>
<sequence length="35" mass="4037">MESVAYILILTLAIGVLFFAIAFREPPRIEKKEEK</sequence>
<comment type="function">
    <text evidence="1">Found at the monomer-monomer interface of the photosystem II (PS II) dimer, plays a role in assembly and dimerization of PSII. PSII is a light-driven water plastoquinone oxidoreductase, using light energy to abstract electrons from H(2)O, generating a proton gradient subsequently used for ATP formation.</text>
</comment>
<comment type="subunit">
    <text evidence="1">PSII is composed of 1 copy each of membrane proteins PsbA, PsbB, PsbC, PsbD, PsbE, PsbF, PsbH, PsbI, PsbJ, PsbK, PsbL, PsbM, PsbT, PsbX, PsbY, PsbZ, Psb30/Ycf12, peripheral proteins PsbO, CyanoQ (PsbQ), PsbU, PsbV and a large number of cofactors. It forms dimeric complexes.</text>
</comment>
<comment type="subcellular location">
    <subcellularLocation>
        <location evidence="1">Cellular thylakoid membrane</location>
        <topology evidence="1">Single-pass membrane protein</topology>
    </subcellularLocation>
</comment>
<comment type="similarity">
    <text evidence="1">Belongs to the PsbT family.</text>
</comment>
<keyword id="KW-0472">Membrane</keyword>
<keyword id="KW-0602">Photosynthesis</keyword>
<keyword id="KW-0604">Photosystem II</keyword>
<keyword id="KW-1185">Reference proteome</keyword>
<keyword id="KW-0793">Thylakoid</keyword>
<keyword id="KW-0812">Transmembrane</keyword>
<keyword id="KW-1133">Transmembrane helix</keyword>
<reference key="1">
    <citation type="journal article" date="2001" name="DNA Res.">
        <title>Complete genomic sequence of the filamentous nitrogen-fixing cyanobacterium Anabaena sp. strain PCC 7120.</title>
        <authorList>
            <person name="Kaneko T."/>
            <person name="Nakamura Y."/>
            <person name="Wolk C.P."/>
            <person name="Kuritz T."/>
            <person name="Sasamoto S."/>
            <person name="Watanabe A."/>
            <person name="Iriguchi M."/>
            <person name="Ishikawa A."/>
            <person name="Kawashima K."/>
            <person name="Kimura T."/>
            <person name="Kishida Y."/>
            <person name="Kohara M."/>
            <person name="Matsumoto M."/>
            <person name="Matsuno A."/>
            <person name="Muraki A."/>
            <person name="Nakazaki N."/>
            <person name="Shimpo S."/>
            <person name="Sugimoto M."/>
            <person name="Takazawa M."/>
            <person name="Yamada M."/>
            <person name="Yasuda M."/>
            <person name="Tabata S."/>
        </authorList>
    </citation>
    <scope>NUCLEOTIDE SEQUENCE [LARGE SCALE GENOMIC DNA]</scope>
    <source>
        <strain>PCC 7120 / SAG 25.82 / UTEX 2576</strain>
    </source>
</reference>
<protein>
    <recommendedName>
        <fullName evidence="1">Photosystem II reaction center protein T</fullName>
        <shortName evidence="1">PSII-T</shortName>
    </recommendedName>
</protein>
<feature type="chain" id="PRO_0000217999" description="Photosystem II reaction center protein T">
    <location>
        <begin position="1"/>
        <end position="35"/>
    </location>
</feature>
<feature type="transmembrane region" description="Helical" evidence="1">
    <location>
        <begin position="3"/>
        <end position="23"/>
    </location>
</feature>